<proteinExistence type="predicted"/>
<organism>
    <name type="scientific">Escherichia coli (strain K12)</name>
    <dbReference type="NCBI Taxonomy" id="83333"/>
    <lineage>
        <taxon>Bacteria</taxon>
        <taxon>Pseudomonadati</taxon>
        <taxon>Pseudomonadota</taxon>
        <taxon>Gammaproteobacteria</taxon>
        <taxon>Enterobacterales</taxon>
        <taxon>Enterobacteriaceae</taxon>
        <taxon>Escherichia</taxon>
    </lineage>
</organism>
<evidence type="ECO:0000305" key="1"/>
<dbReference type="EMBL" id="U14003">
    <property type="protein sequence ID" value="AAA97250.1"/>
    <property type="molecule type" value="Genomic_DNA"/>
</dbReference>
<dbReference type="EMBL" id="U00096">
    <property type="protein sequence ID" value="AAC77309.1"/>
    <property type="molecule type" value="Genomic_DNA"/>
</dbReference>
<dbReference type="EMBL" id="AP009048">
    <property type="protein sequence ID" value="BAE78343.1"/>
    <property type="molecule type" value="Genomic_DNA"/>
</dbReference>
<dbReference type="PIR" id="S56579">
    <property type="entry name" value="S56579"/>
</dbReference>
<dbReference type="RefSeq" id="NP_418773.1">
    <property type="nucleotide sequence ID" value="NC_000913.3"/>
</dbReference>
<dbReference type="RefSeq" id="WP_000467859.1">
    <property type="nucleotide sequence ID" value="NZ_STEB01000025.1"/>
</dbReference>
<dbReference type="BioGRID" id="4262772">
    <property type="interactions" value="16"/>
</dbReference>
<dbReference type="FunCoup" id="P0ADC8">
    <property type="interactions" value="15"/>
</dbReference>
<dbReference type="IntAct" id="P0ADC8">
    <property type="interactions" value="1"/>
</dbReference>
<dbReference type="STRING" id="511145.b4353"/>
<dbReference type="PaxDb" id="511145-b4353"/>
<dbReference type="EnsemblBacteria" id="AAC77309">
    <property type="protein sequence ID" value="AAC77309"/>
    <property type="gene ID" value="b4353"/>
</dbReference>
<dbReference type="GeneID" id="949090"/>
<dbReference type="KEGG" id="ecj:JW4316"/>
<dbReference type="KEGG" id="eco:b4353"/>
<dbReference type="KEGG" id="ecoc:C3026_23515"/>
<dbReference type="PATRIC" id="fig|511145.12.peg.4499"/>
<dbReference type="EchoBASE" id="EB2471"/>
<dbReference type="eggNOG" id="COG2879">
    <property type="taxonomic scope" value="Bacteria"/>
</dbReference>
<dbReference type="HOGENOM" id="CLU_171734_1_1_6"/>
<dbReference type="InParanoid" id="P0ADC8"/>
<dbReference type="OMA" id="TYVEHMQ"/>
<dbReference type="OrthoDB" id="9814284at2"/>
<dbReference type="PhylomeDB" id="P0ADC8"/>
<dbReference type="BioCyc" id="EcoCyc:G7941-MONOMER"/>
<dbReference type="PRO" id="PR:P0ADC8"/>
<dbReference type="Proteomes" id="UP000000625">
    <property type="component" value="Chromosome"/>
</dbReference>
<dbReference type="GO" id="GO:0006974">
    <property type="term" value="P:DNA damage response"/>
    <property type="evidence" value="ECO:0000270"/>
    <property type="project" value="EcoliWiki"/>
</dbReference>
<dbReference type="InterPro" id="IPR007423">
    <property type="entry name" value="Sel_put"/>
</dbReference>
<dbReference type="PANTHER" id="PTHR38453:SF1">
    <property type="entry name" value="CYTOPLASMIC PROTEIN"/>
    <property type="match status" value="1"/>
</dbReference>
<dbReference type="PANTHER" id="PTHR38453">
    <property type="entry name" value="CYTOPLASMIC PROTEIN-RELATED"/>
    <property type="match status" value="1"/>
</dbReference>
<dbReference type="Pfam" id="PF04328">
    <property type="entry name" value="Sel_put"/>
    <property type="match status" value="1"/>
</dbReference>
<keyword id="KW-1185">Reference proteome</keyword>
<comment type="similarity">
    <text evidence="1">To E.coli YbdD.</text>
</comment>
<sequence length="67" mass="7729">MFGNLGQAKKYLGQAAKMLIGIPDYDNYVEHMKTNHPDKPYMSYEEFFRERQNARYGGDGKGGMRCC</sequence>
<gene>
    <name type="primary">yjiX</name>
    <name type="ordered locus">b4353</name>
    <name type="ordered locus">JW4316</name>
</gene>
<reference key="1">
    <citation type="journal article" date="1995" name="Nucleic Acids Res.">
        <title>Analysis of the Escherichia coli genome VI: DNA sequence of the region from 92.8 through 100 minutes.</title>
        <authorList>
            <person name="Burland V.D."/>
            <person name="Plunkett G. III"/>
            <person name="Sofia H.J."/>
            <person name="Daniels D.L."/>
            <person name="Blattner F.R."/>
        </authorList>
    </citation>
    <scope>NUCLEOTIDE SEQUENCE [LARGE SCALE GENOMIC DNA]</scope>
    <source>
        <strain>K12 / MG1655 / ATCC 47076</strain>
    </source>
</reference>
<reference key="2">
    <citation type="journal article" date="1997" name="Science">
        <title>The complete genome sequence of Escherichia coli K-12.</title>
        <authorList>
            <person name="Blattner F.R."/>
            <person name="Plunkett G. III"/>
            <person name="Bloch C.A."/>
            <person name="Perna N.T."/>
            <person name="Burland V."/>
            <person name="Riley M."/>
            <person name="Collado-Vides J."/>
            <person name="Glasner J.D."/>
            <person name="Rode C.K."/>
            <person name="Mayhew G.F."/>
            <person name="Gregor J."/>
            <person name="Davis N.W."/>
            <person name="Kirkpatrick H.A."/>
            <person name="Goeden M.A."/>
            <person name="Rose D.J."/>
            <person name="Mau B."/>
            <person name="Shao Y."/>
        </authorList>
    </citation>
    <scope>NUCLEOTIDE SEQUENCE [LARGE SCALE GENOMIC DNA]</scope>
    <source>
        <strain>K12 / MG1655 / ATCC 47076</strain>
    </source>
</reference>
<reference key="3">
    <citation type="journal article" date="2006" name="Mol. Syst. Biol.">
        <title>Highly accurate genome sequences of Escherichia coli K-12 strains MG1655 and W3110.</title>
        <authorList>
            <person name="Hayashi K."/>
            <person name="Morooka N."/>
            <person name="Yamamoto Y."/>
            <person name="Fujita K."/>
            <person name="Isono K."/>
            <person name="Choi S."/>
            <person name="Ohtsubo E."/>
            <person name="Baba T."/>
            <person name="Wanner B.L."/>
            <person name="Mori H."/>
            <person name="Horiuchi T."/>
        </authorList>
    </citation>
    <scope>NUCLEOTIDE SEQUENCE [LARGE SCALE GENOMIC DNA]</scope>
    <source>
        <strain>K12 / W3110 / ATCC 27325 / DSM 5911</strain>
    </source>
</reference>
<accession>P0ADC8</accession>
<accession>P39395</accession>
<accession>Q2M5W3</accession>
<feature type="chain" id="PRO_0000169800" description="Uncharacterized protein YjiX">
    <location>
        <begin position="1"/>
        <end position="67"/>
    </location>
</feature>
<protein>
    <recommendedName>
        <fullName>Uncharacterized protein YjiX</fullName>
    </recommendedName>
</protein>
<name>YJIX_ECOLI</name>